<reference key="1">
    <citation type="journal article" date="2004" name="Cell">
        <title>Accelerated evolution of nervous system genes in the origin of Homo sapiens.</title>
        <authorList>
            <person name="Dorus S."/>
            <person name="Vallender E.J."/>
            <person name="Evans P.D."/>
            <person name="Anderson J.R."/>
            <person name="Gilbert S.L."/>
            <person name="Mahowald M."/>
            <person name="Wyckoff G.J."/>
            <person name="Malcom C.M."/>
            <person name="Lahn B.T."/>
        </authorList>
    </citation>
    <scope>NUCLEOTIDE SEQUENCE [MRNA]</scope>
</reference>
<evidence type="ECO:0000250" key="1">
    <source>
        <dbReference type="UniProtKB" id="P02709"/>
    </source>
</evidence>
<evidence type="ECO:0000250" key="2">
    <source>
        <dbReference type="UniProtKB" id="P30532"/>
    </source>
</evidence>
<evidence type="ECO:0000250" key="3">
    <source>
        <dbReference type="UniProtKB" id="P32297"/>
    </source>
</evidence>
<evidence type="ECO:0000250" key="4">
    <source>
        <dbReference type="UniProtKB" id="P43681"/>
    </source>
</evidence>
<evidence type="ECO:0000255" key="5"/>
<evidence type="ECO:0000305" key="6"/>
<sequence>MATRGSGPRAPRLLLLVQLVAGRCGLAGAAGGAQRGLSEPSSIAKHEDSLLKDLFQDYERWVRPVEHLNDKIKIKFGLAISQLVDVDEKNQLMTTNVWLKQEWIDVKLRWNPDDYGGIKVIRVPSDSVWTPDIVLFDNADGRFEGTSTKTVIRYNGTVTWTPPANYKSSCTIDVTFFPFDLQNCSMKFGSWTYDGSQVDIILEDQDVDKRDFFDNGEWEIVSATGSKGNRTDSCCWYPYVTYSFVIKRLPLFYTLFLIIPCIGLSFLTVLVFYLPSNEGEKICLCTSVLVSLTVFLLVIEEIIPSSSKVIPLIGEYLVFTMIFVTLSIMVTVFAINIHHRSSSTHNAMAPWVRKIFLHTLPKLLCMRSHVDRYFTQKEETESGSGPKSSRNTLEAALDSVRCITRHIMKENDVREVVEDWKFIAQVLDRMFLWTFLFVSIVGSLGLFVPVIYKWANILIPVHIGNANK</sequence>
<dbReference type="EMBL" id="AY665277">
    <property type="protein sequence ID" value="AAV74315.1"/>
    <property type="molecule type" value="mRNA"/>
</dbReference>
<dbReference type="RefSeq" id="NP_001029106.1">
    <property type="nucleotide sequence ID" value="NM_001033934.1"/>
</dbReference>
<dbReference type="SMR" id="Q5IS51"/>
<dbReference type="FunCoup" id="Q5IS51">
    <property type="interactions" value="590"/>
</dbReference>
<dbReference type="STRING" id="9598.ENSPTRP00000012554"/>
<dbReference type="GlyCosmos" id="Q5IS51">
    <property type="glycosylation" value="3 sites, No reported glycans"/>
</dbReference>
<dbReference type="PaxDb" id="9598-ENSPTRP00000012554"/>
<dbReference type="GeneID" id="619369"/>
<dbReference type="KEGG" id="ptr:619369"/>
<dbReference type="CTD" id="1138"/>
<dbReference type="eggNOG" id="KOG3645">
    <property type="taxonomic scope" value="Eukaryota"/>
</dbReference>
<dbReference type="InParanoid" id="Q5IS51"/>
<dbReference type="OrthoDB" id="12625at9604"/>
<dbReference type="Proteomes" id="UP000002277">
    <property type="component" value="Unplaced"/>
</dbReference>
<dbReference type="GO" id="GO:0005892">
    <property type="term" value="C:acetylcholine-gated channel complex"/>
    <property type="evidence" value="ECO:0000318"/>
    <property type="project" value="GO_Central"/>
</dbReference>
<dbReference type="GO" id="GO:0043005">
    <property type="term" value="C:neuron projection"/>
    <property type="evidence" value="ECO:0000318"/>
    <property type="project" value="GO_Central"/>
</dbReference>
<dbReference type="GO" id="GO:0005886">
    <property type="term" value="C:plasma membrane"/>
    <property type="evidence" value="ECO:0000318"/>
    <property type="project" value="GO_Central"/>
</dbReference>
<dbReference type="GO" id="GO:0045211">
    <property type="term" value="C:postsynaptic membrane"/>
    <property type="evidence" value="ECO:0007669"/>
    <property type="project" value="UniProtKB-KW"/>
</dbReference>
<dbReference type="GO" id="GO:0045202">
    <property type="term" value="C:synapse"/>
    <property type="evidence" value="ECO:0000318"/>
    <property type="project" value="GO_Central"/>
</dbReference>
<dbReference type="GO" id="GO:0022848">
    <property type="term" value="F:acetylcholine-gated monoatomic cation-selective channel activity"/>
    <property type="evidence" value="ECO:0000318"/>
    <property type="project" value="GO_Central"/>
</dbReference>
<dbReference type="GO" id="GO:0004888">
    <property type="term" value="F:transmembrane signaling receptor activity"/>
    <property type="evidence" value="ECO:0007669"/>
    <property type="project" value="InterPro"/>
</dbReference>
<dbReference type="GO" id="GO:0095500">
    <property type="term" value="P:acetylcholine receptor signaling pathway"/>
    <property type="evidence" value="ECO:0000318"/>
    <property type="project" value="GO_Central"/>
</dbReference>
<dbReference type="GO" id="GO:0051899">
    <property type="term" value="P:membrane depolarization"/>
    <property type="evidence" value="ECO:0000318"/>
    <property type="project" value="GO_Central"/>
</dbReference>
<dbReference type="GO" id="GO:0034220">
    <property type="term" value="P:monoatomic ion transmembrane transport"/>
    <property type="evidence" value="ECO:0000318"/>
    <property type="project" value="GO_Central"/>
</dbReference>
<dbReference type="GO" id="GO:0007274">
    <property type="term" value="P:neuromuscular synaptic transmission"/>
    <property type="evidence" value="ECO:0000318"/>
    <property type="project" value="GO_Central"/>
</dbReference>
<dbReference type="GO" id="GO:0035094">
    <property type="term" value="P:response to nicotine"/>
    <property type="evidence" value="ECO:0000318"/>
    <property type="project" value="GO_Central"/>
</dbReference>
<dbReference type="GO" id="GO:0007271">
    <property type="term" value="P:synaptic transmission, cholinergic"/>
    <property type="evidence" value="ECO:0000318"/>
    <property type="project" value="GO_Central"/>
</dbReference>
<dbReference type="CDD" id="cd19018">
    <property type="entry name" value="LGIC_ECD_nAChR_A5"/>
    <property type="match status" value="1"/>
</dbReference>
<dbReference type="CDD" id="cd19064">
    <property type="entry name" value="LGIC_TM_nAChR"/>
    <property type="match status" value="1"/>
</dbReference>
<dbReference type="FunFam" id="1.20.58.390:FF:000041">
    <property type="entry name" value="Neuronal acetylcholine receptor subunit alpha-5"/>
    <property type="match status" value="1"/>
</dbReference>
<dbReference type="FunFam" id="2.70.170.10:FF:000047">
    <property type="entry name" value="neuronal acetylcholine receptor subunit alpha-5 isoform X2"/>
    <property type="match status" value="1"/>
</dbReference>
<dbReference type="FunFam" id="1.20.58.390:FF:000001">
    <property type="entry name" value="Neuronal nicotinic acetylcholine receptor subunit 3"/>
    <property type="match status" value="1"/>
</dbReference>
<dbReference type="Gene3D" id="2.70.170.10">
    <property type="entry name" value="Neurotransmitter-gated ion-channel ligand-binding domain"/>
    <property type="match status" value="1"/>
</dbReference>
<dbReference type="Gene3D" id="1.20.58.390">
    <property type="entry name" value="Neurotransmitter-gated ion-channel transmembrane domain"/>
    <property type="match status" value="2"/>
</dbReference>
<dbReference type="InterPro" id="IPR006202">
    <property type="entry name" value="Neur_chan_lig-bd"/>
</dbReference>
<dbReference type="InterPro" id="IPR036734">
    <property type="entry name" value="Neur_chan_lig-bd_sf"/>
</dbReference>
<dbReference type="InterPro" id="IPR006201">
    <property type="entry name" value="Neur_channel"/>
</dbReference>
<dbReference type="InterPro" id="IPR036719">
    <property type="entry name" value="Neuro-gated_channel_TM_sf"/>
</dbReference>
<dbReference type="InterPro" id="IPR038050">
    <property type="entry name" value="Neuro_actylchol_rec"/>
</dbReference>
<dbReference type="InterPro" id="IPR006029">
    <property type="entry name" value="Neurotrans-gated_channel_TM"/>
</dbReference>
<dbReference type="InterPro" id="IPR018000">
    <property type="entry name" value="Neurotransmitter_ion_chnl_CS"/>
</dbReference>
<dbReference type="InterPro" id="IPR002394">
    <property type="entry name" value="Nicotinic_acetylcholine_rcpt"/>
</dbReference>
<dbReference type="NCBIfam" id="TIGR00860">
    <property type="entry name" value="LIC"/>
    <property type="match status" value="1"/>
</dbReference>
<dbReference type="PANTHER" id="PTHR18945">
    <property type="entry name" value="NEUROTRANSMITTER GATED ION CHANNEL"/>
    <property type="match status" value="1"/>
</dbReference>
<dbReference type="Pfam" id="PF02931">
    <property type="entry name" value="Neur_chan_LBD"/>
    <property type="match status" value="1"/>
</dbReference>
<dbReference type="Pfam" id="PF02932">
    <property type="entry name" value="Neur_chan_memb"/>
    <property type="match status" value="2"/>
</dbReference>
<dbReference type="PRINTS" id="PR00254">
    <property type="entry name" value="NICOTINICR"/>
</dbReference>
<dbReference type="PRINTS" id="PR00252">
    <property type="entry name" value="NRIONCHANNEL"/>
</dbReference>
<dbReference type="SUPFAM" id="SSF90112">
    <property type="entry name" value="Neurotransmitter-gated ion-channel transmembrane pore"/>
    <property type="match status" value="1"/>
</dbReference>
<dbReference type="SUPFAM" id="SSF63712">
    <property type="entry name" value="Nicotinic receptor ligand binding domain-like"/>
    <property type="match status" value="1"/>
</dbReference>
<dbReference type="PROSITE" id="PS00236">
    <property type="entry name" value="NEUROTR_ION_CHANNEL"/>
    <property type="match status" value="1"/>
</dbReference>
<protein>
    <recommendedName>
        <fullName>Neuronal acetylcholine receptor subunit alpha-5</fullName>
    </recommendedName>
</protein>
<keyword id="KW-1003">Cell membrane</keyword>
<keyword id="KW-1015">Disulfide bond</keyword>
<keyword id="KW-0325">Glycoprotein</keyword>
<keyword id="KW-0407">Ion channel</keyword>
<keyword id="KW-0406">Ion transport</keyword>
<keyword id="KW-1071">Ligand-gated ion channel</keyword>
<keyword id="KW-0472">Membrane</keyword>
<keyword id="KW-0675">Receptor</keyword>
<keyword id="KW-1185">Reference proteome</keyword>
<keyword id="KW-0732">Signal</keyword>
<keyword id="KW-0770">Synapse</keyword>
<keyword id="KW-0812">Transmembrane</keyword>
<keyword id="KW-1133">Transmembrane helix</keyword>
<keyword id="KW-0813">Transport</keyword>
<comment type="function">
    <text evidence="2">Component of neuronal acetylcholine receptors (nAChRs) that function as pentameric, ligand-gated cation channels with high calcium permeability among other activities. nAChRs are excitatory neurotrasnmitter receptors formed by a collection of nAChR subunits known to mediate synaptic transmission in the nervous system and the neuromuscular junction. Each nAchR subunit confers differential attributes to channel properties, including activation, deactivation and desensitization kinetics, pH sensitivity, cation permeability, and binding to allosteric modulators. Has an accessory rather than functional role and is only able to form functional nAChRs when co-assembled with another beta subunit. Participates in pentameric assemblies along with CHRNA3, CHRNA4, CHRNB2 and CHRNB4. Increases receptor sensitivity to acetylcholine and nicotine when associated with CHRNA4 and CHRNB2. Plays a role in nicotine addiction.</text>
</comment>
<comment type="catalytic activity">
    <reaction evidence="2">
        <text>Ca(2+)(in) = Ca(2+)(out)</text>
        <dbReference type="Rhea" id="RHEA:29671"/>
        <dbReference type="ChEBI" id="CHEBI:29108"/>
    </reaction>
</comment>
<comment type="catalytic activity">
    <reaction evidence="1">
        <text>K(+)(in) = K(+)(out)</text>
        <dbReference type="Rhea" id="RHEA:29463"/>
        <dbReference type="ChEBI" id="CHEBI:29103"/>
    </reaction>
</comment>
<comment type="catalytic activity">
    <reaction evidence="4">
        <text>Na(+)(in) = Na(+)(out)</text>
        <dbReference type="Rhea" id="RHEA:34963"/>
        <dbReference type="ChEBI" id="CHEBI:29101"/>
    </reaction>
</comment>
<comment type="activity regulation">
    <text evidence="2">Activated by a myriad of ligands such as acetylcholine, cytisine, nicotine, choline and epibatidine.</text>
</comment>
<comment type="subunit">
    <text evidence="2">Neuronal AChR that forms heteropentamers composed of two different type of subunits: alpha and non-alpha (beta). CHRNA5/alpha-5 subunit is only able to form functional nAChRs when co-assembled with another alpha subunit, can be combined to CHRNA4/alpha-4 or CHRNA3/alpha-3 and CHRNB4/beta-4 or CHRNB2/beta-2 to give rise to functional receptors. Interacts with LYPD6.</text>
</comment>
<comment type="subcellular location">
    <subcellularLocation>
        <location evidence="3">Synaptic cell membrane</location>
        <topology evidence="5">Multi-pass membrane protein</topology>
    </subcellularLocation>
    <subcellularLocation>
        <location evidence="3">Cell membrane</location>
        <topology evidence="5">Multi-pass membrane protein</topology>
    </subcellularLocation>
</comment>
<comment type="similarity">
    <text evidence="6">Belongs to the ligand-gated ion channel (TC 1.A.9) family. Acetylcholine receptor (TC 1.A.9.1) subfamily. Alpha-5/CHRNA5 sub-subfamily.</text>
</comment>
<name>ACHA5_PANTR</name>
<feature type="signal peptide" evidence="5">
    <location>
        <begin position="1"/>
        <end position="22"/>
    </location>
</feature>
<feature type="chain" id="PRO_0000000357" description="Neuronal acetylcholine receptor subunit alpha-5">
    <location>
        <begin position="23"/>
        <end position="468"/>
    </location>
</feature>
<feature type="topological domain" description="Extracellular" evidence="5">
    <location>
        <begin position="23"/>
        <end position="254"/>
    </location>
</feature>
<feature type="transmembrane region" description="Helical" evidence="5">
    <location>
        <begin position="255"/>
        <end position="275"/>
    </location>
</feature>
<feature type="transmembrane region" description="Helical" evidence="5">
    <location>
        <begin position="282"/>
        <end position="302"/>
    </location>
</feature>
<feature type="transmembrane region" description="Helical" evidence="5">
    <location>
        <begin position="317"/>
        <end position="337"/>
    </location>
</feature>
<feature type="topological domain" description="Cytoplasmic" evidence="5">
    <location>
        <begin position="338"/>
        <end position="429"/>
    </location>
</feature>
<feature type="transmembrane region" description="Helical" evidence="5">
    <location>
        <begin position="430"/>
        <end position="451"/>
    </location>
</feature>
<feature type="topological domain" description="Extracellular" evidence="5">
    <location>
        <begin position="452"/>
        <end position="468"/>
    </location>
</feature>
<feature type="glycosylation site" description="N-linked (GlcNAc...) asparagine" evidence="5">
    <location>
        <position position="155"/>
    </location>
</feature>
<feature type="glycosylation site" description="N-linked (GlcNAc...) asparagine" evidence="5">
    <location>
        <position position="183"/>
    </location>
</feature>
<feature type="glycosylation site" description="N-linked (GlcNAc...) asparagine" evidence="5">
    <location>
        <position position="229"/>
    </location>
</feature>
<feature type="disulfide bond" evidence="3">
    <location>
        <begin position="170"/>
        <end position="184"/>
    </location>
</feature>
<feature type="disulfide bond" description="Associated with receptor activation" evidence="3">
    <location>
        <begin position="234"/>
        <end position="235"/>
    </location>
</feature>
<proteinExistence type="evidence at transcript level"/>
<accession>Q5IS51</accession>
<gene>
    <name type="primary">CHRNA5</name>
</gene>
<organism>
    <name type="scientific">Pan troglodytes</name>
    <name type="common">Chimpanzee</name>
    <dbReference type="NCBI Taxonomy" id="9598"/>
    <lineage>
        <taxon>Eukaryota</taxon>
        <taxon>Metazoa</taxon>
        <taxon>Chordata</taxon>
        <taxon>Craniata</taxon>
        <taxon>Vertebrata</taxon>
        <taxon>Euteleostomi</taxon>
        <taxon>Mammalia</taxon>
        <taxon>Eutheria</taxon>
        <taxon>Euarchontoglires</taxon>
        <taxon>Primates</taxon>
        <taxon>Haplorrhini</taxon>
        <taxon>Catarrhini</taxon>
        <taxon>Hominidae</taxon>
        <taxon>Pan</taxon>
    </lineage>
</organism>